<keyword id="KW-0687">Ribonucleoprotein</keyword>
<keyword id="KW-0689">Ribosomal protein</keyword>
<reference key="1">
    <citation type="journal article" date="2008" name="PLoS ONE">
        <title>Environmental adaptation: genomic analysis of the piezotolerant and psychrotolerant deep-sea iron reducing bacterium Shewanella piezotolerans WP3.</title>
        <authorList>
            <person name="Wang F."/>
            <person name="Wang J."/>
            <person name="Jian H."/>
            <person name="Zhang B."/>
            <person name="Li S."/>
            <person name="Wang F."/>
            <person name="Zeng X."/>
            <person name="Gao L."/>
            <person name="Bartlett D.H."/>
            <person name="Yu J."/>
            <person name="Hu S."/>
            <person name="Xiao X."/>
        </authorList>
    </citation>
    <scope>NUCLEOTIDE SEQUENCE [LARGE SCALE GENOMIC DNA]</scope>
    <source>
        <strain>WP3 / JCM 13877</strain>
    </source>
</reference>
<evidence type="ECO:0000255" key="1">
    <source>
        <dbReference type="HAMAP-Rule" id="MF_00374"/>
    </source>
</evidence>
<evidence type="ECO:0000305" key="2"/>
<gene>
    <name evidence="1" type="primary">rpmC</name>
    <name type="ordered locus">swp_2019</name>
</gene>
<name>RL29_SHEPW</name>
<dbReference type="EMBL" id="CP000472">
    <property type="protein sequence ID" value="ACJ28775.1"/>
    <property type="molecule type" value="Genomic_DNA"/>
</dbReference>
<dbReference type="RefSeq" id="WP_012144642.1">
    <property type="nucleotide sequence ID" value="NC_011566.1"/>
</dbReference>
<dbReference type="SMR" id="B8CNE1"/>
<dbReference type="STRING" id="225849.swp_2019"/>
<dbReference type="KEGG" id="swp:swp_2019"/>
<dbReference type="eggNOG" id="COG0255">
    <property type="taxonomic scope" value="Bacteria"/>
</dbReference>
<dbReference type="HOGENOM" id="CLU_158491_1_2_6"/>
<dbReference type="OrthoDB" id="9815192at2"/>
<dbReference type="Proteomes" id="UP000000753">
    <property type="component" value="Chromosome"/>
</dbReference>
<dbReference type="GO" id="GO:0022625">
    <property type="term" value="C:cytosolic large ribosomal subunit"/>
    <property type="evidence" value="ECO:0007669"/>
    <property type="project" value="TreeGrafter"/>
</dbReference>
<dbReference type="GO" id="GO:0003735">
    <property type="term" value="F:structural constituent of ribosome"/>
    <property type="evidence" value="ECO:0007669"/>
    <property type="project" value="InterPro"/>
</dbReference>
<dbReference type="GO" id="GO:0006412">
    <property type="term" value="P:translation"/>
    <property type="evidence" value="ECO:0007669"/>
    <property type="project" value="UniProtKB-UniRule"/>
</dbReference>
<dbReference type="CDD" id="cd00427">
    <property type="entry name" value="Ribosomal_L29_HIP"/>
    <property type="match status" value="1"/>
</dbReference>
<dbReference type="FunFam" id="1.10.287.310:FF:000001">
    <property type="entry name" value="50S ribosomal protein L29"/>
    <property type="match status" value="1"/>
</dbReference>
<dbReference type="Gene3D" id="1.10.287.310">
    <property type="match status" value="1"/>
</dbReference>
<dbReference type="HAMAP" id="MF_00374">
    <property type="entry name" value="Ribosomal_uL29"/>
    <property type="match status" value="1"/>
</dbReference>
<dbReference type="InterPro" id="IPR050063">
    <property type="entry name" value="Ribosomal_protein_uL29"/>
</dbReference>
<dbReference type="InterPro" id="IPR001854">
    <property type="entry name" value="Ribosomal_uL29"/>
</dbReference>
<dbReference type="InterPro" id="IPR018254">
    <property type="entry name" value="Ribosomal_uL29_CS"/>
</dbReference>
<dbReference type="InterPro" id="IPR036049">
    <property type="entry name" value="Ribosomal_uL29_sf"/>
</dbReference>
<dbReference type="NCBIfam" id="TIGR00012">
    <property type="entry name" value="L29"/>
    <property type="match status" value="1"/>
</dbReference>
<dbReference type="PANTHER" id="PTHR10916">
    <property type="entry name" value="60S RIBOSOMAL PROTEIN L35/50S RIBOSOMAL PROTEIN L29"/>
    <property type="match status" value="1"/>
</dbReference>
<dbReference type="PANTHER" id="PTHR10916:SF0">
    <property type="entry name" value="LARGE RIBOSOMAL SUBUNIT PROTEIN UL29C"/>
    <property type="match status" value="1"/>
</dbReference>
<dbReference type="Pfam" id="PF00831">
    <property type="entry name" value="Ribosomal_L29"/>
    <property type="match status" value="1"/>
</dbReference>
<dbReference type="SUPFAM" id="SSF46561">
    <property type="entry name" value="Ribosomal protein L29 (L29p)"/>
    <property type="match status" value="1"/>
</dbReference>
<dbReference type="PROSITE" id="PS00579">
    <property type="entry name" value="RIBOSOMAL_L29"/>
    <property type="match status" value="1"/>
</dbReference>
<proteinExistence type="inferred from homology"/>
<protein>
    <recommendedName>
        <fullName evidence="1">Large ribosomal subunit protein uL29</fullName>
    </recommendedName>
    <alternativeName>
        <fullName evidence="2">50S ribosomal protein L29</fullName>
    </alternativeName>
</protein>
<organism>
    <name type="scientific">Shewanella piezotolerans (strain WP3 / JCM 13877)</name>
    <dbReference type="NCBI Taxonomy" id="225849"/>
    <lineage>
        <taxon>Bacteria</taxon>
        <taxon>Pseudomonadati</taxon>
        <taxon>Pseudomonadota</taxon>
        <taxon>Gammaproteobacteria</taxon>
        <taxon>Alteromonadales</taxon>
        <taxon>Shewanellaceae</taxon>
        <taxon>Shewanella</taxon>
    </lineage>
</organism>
<comment type="similarity">
    <text evidence="1">Belongs to the universal ribosomal protein uL29 family.</text>
</comment>
<sequence length="63" mass="7115">MKASELTEKSVEELNAELLGLLREQFNLRMQHATGQLTQTHQLKIVRRNIARVKTIITSKAGA</sequence>
<feature type="chain" id="PRO_1000121816" description="Large ribosomal subunit protein uL29">
    <location>
        <begin position="1"/>
        <end position="63"/>
    </location>
</feature>
<accession>B8CNE1</accession>